<comment type="function">
    <text evidence="2 3 4 5 6 7 8 9 10 11">As the catalytic component of the DNA polymerase gamma complex is involved in the replication of mitochondrial DNA (mtDNA) (PubMed:11917141, PubMed:15537632, PubMed:19924234, PubMed:28430993, PubMed:3095323, PubMed:7499423, PubMed:8798543). Has both 5'-3' DNA polymerase and a highly mispair-specific 3'-5' exonuclease activity (PubMed:15537632, PubMed:26554610, PubMed:2671990, PubMed:28430993, PubMed:7499423, PubMed:8798543). At the end of mtDNA replication DNA ends are ligated to produce a closed circular mtDNA molecule, its exonuclease activity is required for formation of these ligatable ends by preventing DNA synthesis from continuing past the 5'-end of downstream DNA into duplex DNA regions (PubMed:28430993). Does not possess DNA primase activity, does not catalyze strand displacement synthesis and does not contain a 5'-3' exonuclease activity to catalyze nick translation (PubMed:3095323). Important for promoting the elimination of paternal mitochondrial DNA during spermatogenesis, however its exact role in this function has not yet been identified and appears to be independent of its 3'-5'-exonuclease activity and only partially dependent on its DNA polymerase activity (PubMed:28318978).</text>
</comment>
<comment type="catalytic activity">
    <reaction evidence="3 5 6 8 9 11">
        <text>DNA(n) + a 2'-deoxyribonucleoside 5'-triphosphate = DNA(n+1) + diphosphate</text>
        <dbReference type="Rhea" id="RHEA:22508"/>
        <dbReference type="Rhea" id="RHEA-COMP:17339"/>
        <dbReference type="Rhea" id="RHEA-COMP:17340"/>
        <dbReference type="ChEBI" id="CHEBI:33019"/>
        <dbReference type="ChEBI" id="CHEBI:61560"/>
        <dbReference type="ChEBI" id="CHEBI:173112"/>
        <dbReference type="EC" id="2.7.7.7"/>
    </reaction>
    <physiologicalReaction direction="left-to-right" evidence="6">
        <dbReference type="Rhea" id="RHEA:22509"/>
    </physiologicalReaction>
    <physiologicalReaction direction="right-to-left" evidence="6">
        <dbReference type="Rhea" id="RHEA:22510"/>
    </physiologicalReaction>
</comment>
<comment type="cofactor">
    <cofactor evidence="9">
        <name>Mg(2+)</name>
        <dbReference type="ChEBI" id="CHEBI:18420"/>
    </cofactor>
</comment>
<comment type="activity regulation">
    <text evidence="9">Stimulated by KCl, and inhibited by the small molecules o 2',3'-dideoxythymidine 5'-triphosphate (d2TTP) and N-ethylmaleimide (NEM).</text>
</comment>
<comment type="biophysicochemical properties">
    <kinetics>
        <KM evidence="9">0.97 uM for deoxythymidine triphosphate</KM>
    </kinetics>
    <phDependence>
        <text evidence="9">Optimum pH is 9.0.</text>
    </phDependence>
</comment>
<comment type="subunit">
    <text evidence="9 10 12">Component of the DNA polymerase gamma complex consisting of two subunits: the catalytic subunit DNApol-gamma/DNApolG1 and the accessory subunit PolG2/DNApol-gamma35.</text>
</comment>
<comment type="interaction">
    <interactant intactId="EBI-122256">
        <id>Q27607</id>
    </interactant>
    <interactant intactId="EBI-852898">
        <id>Q9VJV8</id>
        <label>PolG2</label>
    </interactant>
    <organismsDiffer>false</organismsDiffer>
    <experiments>2</experiments>
</comment>
<comment type="subcellular location">
    <subcellularLocation>
        <location evidence="7 9">Mitochondrion</location>
    </subcellularLocation>
    <text evidence="7">In sperm, detected in puncta that associate with mitochondrial nucleoids at developmental stages when the nucleoids are being eliminated.</text>
</comment>
<comment type="developmental stage">
    <text evidence="1 9">Expressed in the embryo (at protein levels) (PubMed:3095323). Expressed at high levels in eggs and to a lesser extent during embryonic development (PubMed:10930405). Expressed at all larval stages and at higher levels in adults (PubMed:10930405).</text>
</comment>
<comment type="disruption phenotype">
    <text evidence="5 7">Larval lethal due to severe defects in mitochondrial DNA (mtDNA) replication and synthesis (PubMed:26554610). Larvae display a severe decrease in body weight and a 70% decrease in mtDNA levels but are able to survive on maternal contribution until the third larval stage (PubMed:26554610). RNAi-mediated knockdown in male germline cells, results in defective clearance of paternal mitochondrial nucleoids (containing mitochondrial DNA) during spermatogenesis (PubMed:28318978). Eggs fertilized by mutant males do not display an increase in male mtDNA levels, suggesting that it does not affect regulatory pathways in the embryo that prevent the paternal transmission of mtDNA (PubMed:28318978).</text>
</comment>
<comment type="similarity">
    <text evidence="15">Belongs to the DNA polymerase type-A family.</text>
</comment>
<reference key="1">
    <citation type="journal article" date="1996" name="Genomics">
        <title>Cloning and characterization of the human mitochondrial DNA polymerase, DNA polymerase gamma.</title>
        <authorList>
            <person name="Ropp P.A."/>
            <person name="Copeland W.C."/>
        </authorList>
    </citation>
    <scope>NUCLEOTIDE SEQUENCE [GENOMIC DNA]</scope>
</reference>
<reference key="2">
    <citation type="journal article" date="1996" name="J. Biol. Chem.">
        <title>Catalytic subunit of mitochondrial DNA polymerase from Drosophila embryos. Cloning, bacterial overexpression, and biochemical characterization.</title>
        <authorList>
            <person name="Lewis D.L."/>
            <person name="Farr C.L."/>
            <person name="Wang Y."/>
            <person name="Lagina A.T. III"/>
            <person name="Kaguni L.S."/>
        </authorList>
    </citation>
    <scope>NUCLEOTIDE SEQUENCE [MRNA]</scope>
    <scope>PARTIAL PROTEIN SEQUENCE</scope>
    <scope>FUNCTION</scope>
    <scope>CATALYTIC ACTIVITY</scope>
    <source>
        <tissue>Ovary</tissue>
    </source>
</reference>
<reference key="3">
    <citation type="journal article" date="1999" name="Genetics">
        <title>An exploration of the sequence of a 2.9-Mb region of the genome of Drosophila melanogaster: the Adh region.</title>
        <authorList>
            <person name="Ashburner M."/>
            <person name="Misra S."/>
            <person name="Roote J."/>
            <person name="Lewis S.E."/>
            <person name="Blazej R.G."/>
            <person name="Davis T."/>
            <person name="Doyle C."/>
            <person name="Galle R.F."/>
            <person name="George R.A."/>
            <person name="Harris N.L."/>
            <person name="Hartzell G."/>
            <person name="Harvey D.A."/>
            <person name="Hong L."/>
            <person name="Houston K.A."/>
            <person name="Hoskins R.A."/>
            <person name="Johnson G."/>
            <person name="Martin C."/>
            <person name="Moshrefi A.R."/>
            <person name="Palazzolo M."/>
            <person name="Reese M.G."/>
            <person name="Spradling A.C."/>
            <person name="Tsang G."/>
            <person name="Wan K.H."/>
            <person name="Whitelaw K."/>
            <person name="Celniker S.E."/>
            <person name="Rubin G.M."/>
        </authorList>
    </citation>
    <scope>NUCLEOTIDE SEQUENCE [LARGE SCALE GENOMIC DNA]</scope>
    <source>
        <strain>Berkeley</strain>
    </source>
</reference>
<reference key="4">
    <citation type="journal article" date="2000" name="Science">
        <title>The genome sequence of Drosophila melanogaster.</title>
        <authorList>
            <person name="Adams M.D."/>
            <person name="Celniker S.E."/>
            <person name="Holt R.A."/>
            <person name="Evans C.A."/>
            <person name="Gocayne J.D."/>
            <person name="Amanatides P.G."/>
            <person name="Scherer S.E."/>
            <person name="Li P.W."/>
            <person name="Hoskins R.A."/>
            <person name="Galle R.F."/>
            <person name="George R.A."/>
            <person name="Lewis S.E."/>
            <person name="Richards S."/>
            <person name="Ashburner M."/>
            <person name="Henderson S.N."/>
            <person name="Sutton G.G."/>
            <person name="Wortman J.R."/>
            <person name="Yandell M.D."/>
            <person name="Zhang Q."/>
            <person name="Chen L.X."/>
            <person name="Brandon R.C."/>
            <person name="Rogers Y.-H.C."/>
            <person name="Blazej R.G."/>
            <person name="Champe M."/>
            <person name="Pfeiffer B.D."/>
            <person name="Wan K.H."/>
            <person name="Doyle C."/>
            <person name="Baxter E.G."/>
            <person name="Helt G."/>
            <person name="Nelson C.R."/>
            <person name="Miklos G.L.G."/>
            <person name="Abril J.F."/>
            <person name="Agbayani A."/>
            <person name="An H.-J."/>
            <person name="Andrews-Pfannkoch C."/>
            <person name="Baldwin D."/>
            <person name="Ballew R.M."/>
            <person name="Basu A."/>
            <person name="Baxendale J."/>
            <person name="Bayraktaroglu L."/>
            <person name="Beasley E.M."/>
            <person name="Beeson K.Y."/>
            <person name="Benos P.V."/>
            <person name="Berman B.P."/>
            <person name="Bhandari D."/>
            <person name="Bolshakov S."/>
            <person name="Borkova D."/>
            <person name="Botchan M.R."/>
            <person name="Bouck J."/>
            <person name="Brokstein P."/>
            <person name="Brottier P."/>
            <person name="Burtis K.C."/>
            <person name="Busam D.A."/>
            <person name="Butler H."/>
            <person name="Cadieu E."/>
            <person name="Center A."/>
            <person name="Chandra I."/>
            <person name="Cherry J.M."/>
            <person name="Cawley S."/>
            <person name="Dahlke C."/>
            <person name="Davenport L.B."/>
            <person name="Davies P."/>
            <person name="de Pablos B."/>
            <person name="Delcher A."/>
            <person name="Deng Z."/>
            <person name="Mays A.D."/>
            <person name="Dew I."/>
            <person name="Dietz S.M."/>
            <person name="Dodson K."/>
            <person name="Doup L.E."/>
            <person name="Downes M."/>
            <person name="Dugan-Rocha S."/>
            <person name="Dunkov B.C."/>
            <person name="Dunn P."/>
            <person name="Durbin K.J."/>
            <person name="Evangelista C.C."/>
            <person name="Ferraz C."/>
            <person name="Ferriera S."/>
            <person name="Fleischmann W."/>
            <person name="Fosler C."/>
            <person name="Gabrielian A.E."/>
            <person name="Garg N.S."/>
            <person name="Gelbart W.M."/>
            <person name="Glasser K."/>
            <person name="Glodek A."/>
            <person name="Gong F."/>
            <person name="Gorrell J.H."/>
            <person name="Gu Z."/>
            <person name="Guan P."/>
            <person name="Harris M."/>
            <person name="Harris N.L."/>
            <person name="Harvey D.A."/>
            <person name="Heiman T.J."/>
            <person name="Hernandez J.R."/>
            <person name="Houck J."/>
            <person name="Hostin D."/>
            <person name="Houston K.A."/>
            <person name="Howland T.J."/>
            <person name="Wei M.-H."/>
            <person name="Ibegwam C."/>
            <person name="Jalali M."/>
            <person name="Kalush F."/>
            <person name="Karpen G.H."/>
            <person name="Ke Z."/>
            <person name="Kennison J.A."/>
            <person name="Ketchum K.A."/>
            <person name="Kimmel B.E."/>
            <person name="Kodira C.D."/>
            <person name="Kraft C.L."/>
            <person name="Kravitz S."/>
            <person name="Kulp D."/>
            <person name="Lai Z."/>
            <person name="Lasko P."/>
            <person name="Lei Y."/>
            <person name="Levitsky A.A."/>
            <person name="Li J.H."/>
            <person name="Li Z."/>
            <person name="Liang Y."/>
            <person name="Lin X."/>
            <person name="Liu X."/>
            <person name="Mattei B."/>
            <person name="McIntosh T.C."/>
            <person name="McLeod M.P."/>
            <person name="McPherson D."/>
            <person name="Merkulov G."/>
            <person name="Milshina N.V."/>
            <person name="Mobarry C."/>
            <person name="Morris J."/>
            <person name="Moshrefi A."/>
            <person name="Mount S.M."/>
            <person name="Moy M."/>
            <person name="Murphy B."/>
            <person name="Murphy L."/>
            <person name="Muzny D.M."/>
            <person name="Nelson D.L."/>
            <person name="Nelson D.R."/>
            <person name="Nelson K.A."/>
            <person name="Nixon K."/>
            <person name="Nusskern D.R."/>
            <person name="Pacleb J.M."/>
            <person name="Palazzolo M."/>
            <person name="Pittman G.S."/>
            <person name="Pan S."/>
            <person name="Pollard J."/>
            <person name="Puri V."/>
            <person name="Reese M.G."/>
            <person name="Reinert K."/>
            <person name="Remington K."/>
            <person name="Saunders R.D.C."/>
            <person name="Scheeler F."/>
            <person name="Shen H."/>
            <person name="Shue B.C."/>
            <person name="Siden-Kiamos I."/>
            <person name="Simpson M."/>
            <person name="Skupski M.P."/>
            <person name="Smith T.J."/>
            <person name="Spier E."/>
            <person name="Spradling A.C."/>
            <person name="Stapleton M."/>
            <person name="Strong R."/>
            <person name="Sun E."/>
            <person name="Svirskas R."/>
            <person name="Tector C."/>
            <person name="Turner R."/>
            <person name="Venter E."/>
            <person name="Wang A.H."/>
            <person name="Wang X."/>
            <person name="Wang Z.-Y."/>
            <person name="Wassarman D.A."/>
            <person name="Weinstock G.M."/>
            <person name="Weissenbach J."/>
            <person name="Williams S.M."/>
            <person name="Woodage T."/>
            <person name="Worley K.C."/>
            <person name="Wu D."/>
            <person name="Yang S."/>
            <person name="Yao Q.A."/>
            <person name="Ye J."/>
            <person name="Yeh R.-F."/>
            <person name="Zaveri J.S."/>
            <person name="Zhan M."/>
            <person name="Zhang G."/>
            <person name="Zhao Q."/>
            <person name="Zheng L."/>
            <person name="Zheng X.H."/>
            <person name="Zhong F.N."/>
            <person name="Zhong W."/>
            <person name="Zhou X."/>
            <person name="Zhu S.C."/>
            <person name="Zhu X."/>
            <person name="Smith H.O."/>
            <person name="Gibbs R.A."/>
            <person name="Myers E.W."/>
            <person name="Rubin G.M."/>
            <person name="Venter J.C."/>
        </authorList>
    </citation>
    <scope>NUCLEOTIDE SEQUENCE [LARGE SCALE GENOMIC DNA]</scope>
    <source>
        <strain>Berkeley</strain>
    </source>
</reference>
<reference key="5">
    <citation type="journal article" date="2002" name="Genome Biol.">
        <title>Annotation of the Drosophila melanogaster euchromatic genome: a systematic review.</title>
        <authorList>
            <person name="Misra S."/>
            <person name="Crosby M.A."/>
            <person name="Mungall C.J."/>
            <person name="Matthews B.B."/>
            <person name="Campbell K.S."/>
            <person name="Hradecky P."/>
            <person name="Huang Y."/>
            <person name="Kaminker J.S."/>
            <person name="Millburn G.H."/>
            <person name="Prochnik S.E."/>
            <person name="Smith C.D."/>
            <person name="Tupy J.L."/>
            <person name="Whitfield E.J."/>
            <person name="Bayraktaroglu L."/>
            <person name="Berman B.P."/>
            <person name="Bettencourt B.R."/>
            <person name="Celniker S.E."/>
            <person name="de Grey A.D.N.J."/>
            <person name="Drysdale R.A."/>
            <person name="Harris N.L."/>
            <person name="Richter J."/>
            <person name="Russo S."/>
            <person name="Schroeder A.J."/>
            <person name="Shu S.Q."/>
            <person name="Stapleton M."/>
            <person name="Yamada C."/>
            <person name="Ashburner M."/>
            <person name="Gelbart W.M."/>
            <person name="Rubin G.M."/>
            <person name="Lewis S.E."/>
        </authorList>
    </citation>
    <scope>GENOME REANNOTATION</scope>
    <source>
        <strain>Berkeley</strain>
    </source>
</reference>
<reference key="6">
    <citation type="journal article" date="2002" name="Genome Biol.">
        <title>A Drosophila full-length cDNA resource.</title>
        <authorList>
            <person name="Stapleton M."/>
            <person name="Carlson J.W."/>
            <person name="Brokstein P."/>
            <person name="Yu C."/>
            <person name="Champe M."/>
            <person name="George R.A."/>
            <person name="Guarin H."/>
            <person name="Kronmiller B."/>
            <person name="Pacleb J.M."/>
            <person name="Park S."/>
            <person name="Wan K.H."/>
            <person name="Rubin G.M."/>
            <person name="Celniker S.E."/>
        </authorList>
    </citation>
    <scope>NUCLEOTIDE SEQUENCE [LARGE SCALE MRNA]</scope>
    <source>
        <strain>Berkeley</strain>
        <tissue>Testis</tissue>
    </source>
</reference>
<reference key="7">
    <citation type="submission" date="2008-09" db="EMBL/GenBank/DDBJ databases">
        <authorList>
            <person name="Carlson J.W."/>
            <person name="Booth B."/>
            <person name="Frise E."/>
            <person name="Park S."/>
            <person name="Wan K.H."/>
            <person name="Yu C."/>
            <person name="Celniker S.E."/>
        </authorList>
    </citation>
    <scope>NUCLEOTIDE SEQUENCE [LARGE SCALE MRNA]</scope>
    <source>
        <strain>Berkeley</strain>
    </source>
</reference>
<reference key="8">
    <citation type="journal article" date="1986" name="J. Biol. Chem.">
        <title>A mitochondrial DNA polymerase from embryos of Drosophila melanogaster. Purification, subunit structure, and partial characterization.</title>
        <authorList>
            <person name="Wernette C.M."/>
            <person name="Kaguni L.S."/>
        </authorList>
    </citation>
    <scope>FUNCTION</scope>
    <scope>CATALYTIC ACTIVITY</scope>
    <scope>COFACTOR</scope>
    <scope>ACTIVITY REGULATION</scope>
    <scope>BIOPHYSICOCHEMICAL PROPERTIES</scope>
    <scope>IDENTIFICATION IN THE DNA POLYMERASE GAMMA COMPLEX</scope>
    <scope>SUBCELLULAR LOCATION</scope>
    <scope>DEVELOPMENTAL STAGE</scope>
</reference>
<reference key="9">
    <citation type="journal article" date="1989" name="Proc. Natl. Acad. Sci. U.S.A.">
        <title>Mismatch-specific 3'----5' exonuclease associated with the mitochondrial DNA polymerase from Drosophila embryos.</title>
        <authorList>
            <person name="Kaguni L.S."/>
            <person name="Olson M.W."/>
        </authorList>
    </citation>
    <scope>FUNCTION</scope>
    <scope>CATALYTIC ACTIVITY</scope>
</reference>
<reference key="10">
    <citation type="journal article" date="1995" name="J. Biol. Chem.">
        <title>Subunit structure of mitochondrial DNA polymerase from Drosophila embryos. Physical and immunological studies.</title>
        <authorList>
            <person name="Olson M.W."/>
            <person name="Wang Y."/>
            <person name="Elder R.H."/>
            <person name="Kaguni L.S."/>
        </authorList>
    </citation>
    <scope>FUNCTION</scope>
    <scope>IDENTIFICATION IN THE DNA POLYMERASE GAMMA COMPLEX</scope>
</reference>
<reference key="11">
    <citation type="journal article" date="1997" name="J. Biol. Chem.">
        <title>Accessory subunit of mitochondrial DNA polymerase from Drosophila embryos. Cloning, molecular analysis, and association in the native enzyme.</title>
        <authorList>
            <person name="Wang Y."/>
            <person name="Farr C.L."/>
            <person name="Kaguni L.S."/>
        </authorList>
    </citation>
    <scope>IDENTIFICATION IN THE DNA POLYMERASE GAMMA COMPLEX</scope>
</reference>
<reference key="12">
    <citation type="journal article" date="2000" name="J. Biol. Chem.">
        <title>Differential regulation of the catalytic and accessory subunit genes of Drosophila mitochondrial DNA polymerase.</title>
        <authorList>
            <person name="Lefai E."/>
            <person name="Fernandez-Moreno M.A."/>
            <person name="Alahari A."/>
            <person name="Kaguni L.S."/>
            <person name="Garesse R."/>
        </authorList>
    </citation>
    <scope>DEVELOPMENTAL STAGE</scope>
</reference>
<reference key="13">
    <citation type="journal article" date="2002" name="Proc. Natl. Acad. Sci. U.S.A.">
        <title>The accessory subunit of DNA polymerase gamma is essential for mitochondrial DNA maintenance and development in Drosophila melanogaster.</title>
        <authorList>
            <person name="Iyengar B."/>
            <person name="Luo N."/>
            <person name="Farr C.L."/>
            <person name="Kaguni L.S."/>
            <person name="Campos A.R."/>
        </authorList>
    </citation>
    <scope>FUNCTION</scope>
    <scope>MUTAGENESIS OF GLU-595</scope>
</reference>
<reference key="14">
    <citation type="journal article" date="2005" name="J. Biol. Chem.">
        <title>Mutations in the spacer region of Drosophila mitochondrial DNA polymerase affect DNA binding, processivity, and the balance between Pol and Exo function.</title>
        <authorList>
            <person name="Luo N."/>
            <person name="Kaguni L.S."/>
        </authorList>
    </citation>
    <scope>FUNCTION</scope>
    <scope>CATALYTIC ACTIVITY</scope>
    <scope>MUTAGENESIS OF 413-ARG--ARG-470; 419-TYR--ASP-421; 483-ASN--ILE-533; 536-ASP--ILE-581; 556-PRO--LEU-558; TRP-576; 666-CYS--PRO-742; 687-LYS--PHE-689 AND 719-SER--TRP-721</scope>
</reference>
<reference key="15">
    <citation type="journal article" date="2009" name="PLoS ONE">
        <title>Disruption of mitochondrial DNA replication in Drosophila increases mitochondrial fast axonal transport in vivo.</title>
        <authorList>
            <person name="Baqri R.M."/>
            <person name="Turner B.A."/>
            <person name="Rheuben M.B."/>
            <person name="Hammond B.D."/>
            <person name="Kaguni L.S."/>
            <person name="Miller K.E."/>
        </authorList>
    </citation>
    <scope>FUNCTION</scope>
    <scope>MUTAGENESIS OF GLU-595 AND 1085-SER--SER-1145</scope>
</reference>
<reference key="16">
    <citation type="journal article" date="2015" name="Nat. Commun.">
        <title>Complementation between polymerase- and exonuclease-deficient mitochondrial DNA polymerase mutants in genomically engineered flies.</title>
        <authorList>
            <person name="Bratic A."/>
            <person name="Kauppila T.E."/>
            <person name="Macao B."/>
            <person name="Groenke S."/>
            <person name="Siibak T."/>
            <person name="Stewart J.B."/>
            <person name="Baggio F."/>
            <person name="Dols J."/>
            <person name="Partridge L."/>
            <person name="Falkenberg M."/>
            <person name="Wredenberg A."/>
            <person name="Larsson N.G."/>
        </authorList>
    </citation>
    <scope>FUNCTION</scope>
    <scope>CATALYTIC ACTIVITY</scope>
    <scope>DISRUPTION PHENOTYPE</scope>
    <scope>MUTAGENESIS OF ASP-263; GLN-1009 AND HIS-1038</scope>
</reference>
<reference key="17">
    <citation type="journal article" date="2017" name="Curr. Biol.">
        <title>The mitochondrial DNA polymerase promotes elimination of paternal mitochondrial genomes.</title>
        <authorList>
            <person name="Yu Z."/>
            <person name="O'Farrell P.H."/>
            <person name="Yakubovich N."/>
            <person name="DeLuca S.Z."/>
        </authorList>
    </citation>
    <scope>FUNCTION</scope>
    <scope>SUBCELLULAR LOCATION</scope>
    <scope>DISRUPTION PHENOTYPE</scope>
    <scope>MUTAGENESIS OF ASP-263 AND GLU-813</scope>
</reference>
<reference key="18">
    <citation type="journal article" date="2017" name="Hum. Mol. Genet.">
        <title>A multi-systemic mitochondrial disorder due to a dominant p.Y955H disease variant in DNA polymerase gamma.</title>
        <authorList>
            <person name="Siibak T."/>
            <person name="Clemente P."/>
            <person name="Bratic A."/>
            <person name="Bruhn H."/>
            <person name="Kauppila T.E.S."/>
            <person name="Macao B."/>
            <person name="Schober F.A."/>
            <person name="Lesko N."/>
            <person name="Wibom R."/>
            <person name="Naess K."/>
            <person name="Nennesmo I."/>
            <person name="Wedell A."/>
            <person name="Peter B."/>
            <person name="Freyer C."/>
            <person name="Falkenberg M."/>
            <person name="Wredenberg A."/>
        </authorList>
    </citation>
    <scope>FUNCTION</scope>
    <scope>CATALYTIC ACTIVITY</scope>
    <scope>MUTAGENESIS OF TYR-873</scope>
</reference>
<name>DPOG1_DROME</name>
<organism>
    <name type="scientific">Drosophila melanogaster</name>
    <name type="common">Fruit fly</name>
    <dbReference type="NCBI Taxonomy" id="7227"/>
    <lineage>
        <taxon>Eukaryota</taxon>
        <taxon>Metazoa</taxon>
        <taxon>Ecdysozoa</taxon>
        <taxon>Arthropoda</taxon>
        <taxon>Hexapoda</taxon>
        <taxon>Insecta</taxon>
        <taxon>Pterygota</taxon>
        <taxon>Neoptera</taxon>
        <taxon>Endopterygota</taxon>
        <taxon>Diptera</taxon>
        <taxon>Brachycera</taxon>
        <taxon>Muscomorpha</taxon>
        <taxon>Ephydroidea</taxon>
        <taxon>Drosophilidae</taxon>
        <taxon>Drosophila</taxon>
        <taxon>Sophophora</taxon>
    </lineage>
</organism>
<evidence type="ECO:0000269" key="1">
    <source>
    </source>
</evidence>
<evidence type="ECO:0000269" key="2">
    <source>
    </source>
</evidence>
<evidence type="ECO:0000269" key="3">
    <source>
    </source>
</evidence>
<evidence type="ECO:0000269" key="4">
    <source>
    </source>
</evidence>
<evidence type="ECO:0000269" key="5">
    <source>
    </source>
</evidence>
<evidence type="ECO:0000269" key="6">
    <source>
    </source>
</evidence>
<evidence type="ECO:0000269" key="7">
    <source>
    </source>
</evidence>
<evidence type="ECO:0000269" key="8">
    <source>
    </source>
</evidence>
<evidence type="ECO:0000269" key="9">
    <source>
    </source>
</evidence>
<evidence type="ECO:0000269" key="10">
    <source>
    </source>
</evidence>
<evidence type="ECO:0000269" key="11">
    <source>
    </source>
</evidence>
<evidence type="ECO:0000269" key="12">
    <source>
    </source>
</evidence>
<evidence type="ECO:0000303" key="13">
    <source>
    </source>
</evidence>
<evidence type="ECO:0000303" key="14">
    <source>
    </source>
</evidence>
<evidence type="ECO:0000305" key="15"/>
<evidence type="ECO:0000312" key="16">
    <source>
        <dbReference type="FlyBase" id="FBgn0004406"/>
    </source>
</evidence>
<proteinExistence type="evidence at protein level"/>
<protein>
    <recommendedName>
        <fullName evidence="15">DNA polymerase subunit gamma-1, mitochondrial</fullName>
        <ecNumber evidence="3 5 6 8 9 11">2.7.7.7</ecNumber>
    </recommendedName>
    <alternativeName>
        <fullName evidence="15">3'-5' exodeoxyribonuclease</fullName>
        <ecNumber evidence="3 5 6 8 11">3.1.11.-</ecNumber>
    </alternativeName>
    <alternativeName>
        <fullName evidence="16">DNA polymerase gamma subunit 1</fullName>
    </alternativeName>
    <alternativeName>
        <fullName evidence="15">Mitochondrial DNA polymerase catalytic subunit</fullName>
        <shortName evidence="14">Protein tamas</shortName>
    </alternativeName>
</protein>
<accession>Q27607</accession>
<accession>B5RIX0</accession>
<accession>Q8T4E6</accession>
<accession>Q94906</accession>
<accession>Q9V442</accession>
<sequence>MQFHLIRKYASKVSREHYASSSVKIFRRVKPPQKVNKPKKPENVENGPTEYAENLVKVQMISRNLHAQLFPQAPRSISEQQVASAKVYKDELRRHGVDIESSAPVSDVQLKLPALRGANIEEHFHNIAKEQVQPYEELLLPLVQCEQLPKRPKRWAFHTGWTAYDPEDGTATPVDHPLEKGLVFDVEVCVSEGQAPVLATAVSTKRWYSWVSSKLTKHRLSVEKLEPLDVDTDSERPHYTTDELIPLGTTGPGLVVGHNVSYDRARLKEQYLTEDTGTRFVDTMSLHMCVSGVTSYQRAMLKSKKEPAAEDLGWLEQSSLNSLVEVHRLYCGGDTLSKEPRNIFVEGTLEQVRQSFQSLTNYCASDVEATHRILRVLYPLYAERFPHPASLAGMLEMGSAYLPVNSNWERYIREAQLTYEDLSIEAKYHLGRRAEEACSLLLDDQYRQNLWLWDEDWSVQELKLKQPPKRKPLPTVELKDSGNTPEERRLQAKFQHLYDQQALLPARRPLLPGYPLWYRKLCRKPPAKRADEILEDDEEPWSPGASEISTGMQIAPKLLSLCWEGYPLHYEREQGWGFLVPFRSDSEGVDRLPMEQLLAHCPVPEFARLSASKAESDMAFDMLPGQVEQHLGKREHYKKLSQKQQRLETQYQGSGVWCNKVLDDCCFFLKLPHKNGPSFRVGNPLSKDFLNKFAENVLSSGDPSCQAAARVIDIARMMSYWRNNRDRIMGQMVVWLDSQQLPNEFTGEKCQPIAYGAICPQVVACGTLTRRAMEPTWMTASNSRPDRLGSELRSMVQAPPGYRLVGADVDSQELWIASVLGDAYACGEHGATPLGWMTLSGSKSNGSDMHSITAKAVGISRDHAKVINYARIYGAGQLFAETLLRQFNPTFSASEAKAKAMKMFSITKGKRVYRLREEFHDELEDRAYSSYEASRLAIQRNRTLAEVFHRPNWQGGTESAMFNRLEEIATGSQPRTPFLGGRLSRALEADTGPEQEQRFLPTRINWVVQSGAVDFLHLMLVSMRWLMGSHVRFCLSFHDELRYLVKEELSPKAALAMHITNLMTRSFCVSRIGLQDLPMSVAFFSSVEVDTVLRKECTMDCKTPSNPHGLRIGYGIQPGQSLSVAEAIEKAGGNDVSQWDWIKKS</sequence>
<feature type="transit peptide" description="Mitochondrion">
    <location>
        <begin position="1"/>
        <end position="9"/>
    </location>
</feature>
<feature type="chain" id="PRO_0000007313" description="DNA polymerase subunit gamma-1, mitochondrial">
    <location>
        <begin position="10"/>
        <end position="1145"/>
    </location>
</feature>
<feature type="mutagenesis site" description="Defects in mitochondrial DNA (mtDNA) replication and synthesis results in pupal lethality. Only half of the mutants survive to the pupal stage but die shortly afterwards. Larvae display an accumulation of point mutations and linear deletions of mtDNA. No decrease in larvae body weight. Unable to rescue the defective clearance of paternal mitochondrial nucleoids in mutants." evidence="5 7">
    <original>D</original>
    <variation>A</variation>
    <location>
        <position position="263"/>
    </location>
</feature>
<feature type="mutagenesis site" description="Greatly reduces polymerase activity." evidence="3">
    <location>
        <begin position="413"/>
        <end position="470"/>
    </location>
</feature>
<feature type="mutagenesis site" description="In YED; slight reduction in polymerase activity." evidence="3">
    <original>YED</original>
    <variation>AAA</variation>
    <location>
        <begin position="419"/>
        <end position="421"/>
    </location>
</feature>
<feature type="mutagenesis site" description="Slight reduction in polymerase activity." evidence="3">
    <location>
        <begin position="483"/>
        <end position="533"/>
    </location>
</feature>
<feature type="mutagenesis site" description="Greatly reduces polymerase activity." evidence="3">
    <location>
        <begin position="536"/>
        <end position="581"/>
    </location>
</feature>
<feature type="mutagenesis site" description="In PKL; severe reduction in polymerase activity." evidence="3">
    <original>PKL</original>
    <variation>AAA</variation>
    <location>
        <begin position="556"/>
        <end position="558"/>
    </location>
</feature>
<feature type="mutagenesis site" description="Severe reduction in polymerase activity." evidence="3">
    <original>W</original>
    <variation>A</variation>
    <location>
        <position position="576"/>
    </location>
</feature>
<feature type="mutagenesis site" description="Loss of mitochondrial DNA which disrupts mitochondrial morphology; larval brains are smaller due to defective cell proliferation leading to death at the pupal stage. Leads to higher mitochondrial density in proximal nerves and muscles as well as increased flux of bidirectional mitochondrial axonal transport; when associated with 1085-S--S-1145 DEL." evidence="2 4">
    <original>E</original>
    <variation>A</variation>
    <location>
        <position position="595"/>
    </location>
</feature>
<feature type="mutagenesis site" description="Greatly reduces polymerase activity." evidence="3">
    <location>
        <begin position="666"/>
        <end position="742"/>
    </location>
</feature>
<feature type="mutagenesis site" description="In KDF; reduction in polymerase activity." evidence="3">
    <original>KDF</original>
    <variation>AAA</variation>
    <location>
        <begin position="687"/>
        <end position="689"/>
    </location>
</feature>
<feature type="mutagenesis site" description="In SYW; severe reduction in polymerase activity." evidence="3">
    <original>SYW</original>
    <variation>AAA</variation>
    <location>
        <begin position="719"/>
        <end position="721"/>
    </location>
</feature>
<feature type="mutagenesis site" description="Partially rescues the defective clearance of paternal mitochondrial nucleoids in mutants." evidence="7">
    <original>E</original>
    <variation>V</variation>
    <location>
        <position position="813"/>
    </location>
</feature>
<feature type="mutagenesis site" description="Defects in mitochondrial DNA (mtDNA) replication and synthesis results in larval lethality at the third instar stage. Displays increased exonuclease activity and shows replicative stalling, particularly at dATP insertion sites. Defective replication and synthesis results in decreased levels of mtDNA but does not result in multiple linear deletions in mtDNA. No effect on DNA binding." evidence="8">
    <original>Y</original>
    <variation>C</variation>
    <location>
        <position position="873"/>
    </location>
</feature>
<feature type="mutagenesis site" description="Severe defects in mitochondrial DNA (mtDNA) replication and synthesis results in larval lethality at the third instar stage. Exonuclease activity is increased, and displays replicative stalling, particularly at dATP insertion sites, and decreased DNA binding. Defective replication and synthesis results in decreased levels of mtDNA but does not result in multiple linear deletions in mtDNA." evidence="8">
    <original>Y</original>
    <variation>H</variation>
    <location>
        <position position="873"/>
    </location>
</feature>
<feature type="mutagenesis site" description="Defects in mitochondrial DNA (mtDNA) replication and synthesis results in the death of most mutants at the third instar stage. Only two percent survive to the pupal stage but die shortly afterwards. Five day old larvae display a severe decrease in mtDNA levels and a significant reduction in body weight." evidence="5">
    <original>Q</original>
    <variation>A</variation>
    <location>
        <position position="1009"/>
    </location>
</feature>
<feature type="mutagenesis site" description="Defects in mitochondrial DNA (mtDNA) replication and synthesis results in larval lethality at the third instar stage. Larvae 5 days old, display a severe decrease in mtDNA levels and a significant reduction in body weight. Does not result in linear deletions of mtDNA." evidence="5">
    <original>H</original>
    <variation>A</variation>
    <location>
        <position position="1038"/>
    </location>
</feature>
<feature type="mutagenesis site" description="Loss of mitochondrial DNA which disrupts mitochondrial morphology, leads to higher mitochondrial density in proximal nerves and muscles as well as increased flux of bidirectional mitochondrial axonal transport; when associated with Ala-595." evidence="4">
    <location>
        <begin position="1085"/>
        <end position="1145"/>
    </location>
</feature>
<feature type="sequence conflict" description="In Ref. 2; AAC47658." evidence="15" ref="2">
    <original>A</original>
    <variation>P</variation>
    <location>
        <position position="114"/>
    </location>
</feature>
<feature type="sequence conflict" description="In Ref. 2; AAC47658." evidence="15" ref="2">
    <original>T</original>
    <variation>P</variation>
    <location>
        <position position="241"/>
    </location>
</feature>
<feature type="sequence conflict" description="In Ref. 2; AAC47658." evidence="15" ref="2">
    <original>T</original>
    <variation>S</variation>
    <location>
        <position position="250"/>
    </location>
</feature>
<feature type="sequence conflict" description="In Ref. 2; AAC47658." evidence="15" ref="2">
    <original>T</original>
    <variation>I</variation>
    <location>
        <position position="273"/>
    </location>
</feature>
<feature type="sequence conflict" description="In Ref. 2; AAC47658." evidence="15" ref="2">
    <original>S</original>
    <variation>P</variation>
    <location>
        <position position="319"/>
    </location>
</feature>
<feature type="sequence conflict" description="In Ref. 1; AAC47290." evidence="15" ref="1">
    <original>V</original>
    <variation>L</variation>
    <location>
        <position position="326"/>
    </location>
</feature>
<feature type="sequence conflict" description="In Ref. 2; AAC47658." evidence="15" ref="2">
    <original>L</original>
    <variation>I</variation>
    <location>
        <position position="478"/>
    </location>
</feature>
<feature type="sequence conflict" description="In Ref. 2; AAC47658." evidence="15" ref="2">
    <original>A</original>
    <variation>E</variation>
    <location>
        <position position="530"/>
    </location>
</feature>
<feature type="sequence conflict" description="In Ref. 2; AAC47658." evidence="15" ref="2">
    <original>H</original>
    <variation>R</variation>
    <location>
        <position position="600"/>
    </location>
</feature>
<feature type="sequence conflict" description="In Ref. 2; AAC47658." evidence="15" ref="2">
    <original>M</original>
    <variation>L</variation>
    <location>
        <position position="732"/>
    </location>
</feature>
<feature type="sequence conflict" description="In Ref. 1; AAC47290 and 6; AAL89964." evidence="15" ref="1 6">
    <original>N</original>
    <variation>K</variation>
    <location>
        <position position="952"/>
    </location>
</feature>
<keyword id="KW-0903">Direct protein sequencing</keyword>
<keyword id="KW-0235">DNA replication</keyword>
<keyword id="KW-0238">DNA-binding</keyword>
<keyword id="KW-0239">DNA-directed DNA polymerase</keyword>
<keyword id="KW-0378">Hydrolase</keyword>
<keyword id="KW-0460">Magnesium</keyword>
<keyword id="KW-0496">Mitochondrion</keyword>
<keyword id="KW-0548">Nucleotidyltransferase</keyword>
<keyword id="KW-1185">Reference proteome</keyword>
<keyword id="KW-0808">Transferase</keyword>
<keyword id="KW-0809">Transit peptide</keyword>
<dbReference type="EC" id="2.7.7.7" evidence="3 5 6 8 9 11"/>
<dbReference type="EC" id="3.1.11.-" evidence="3 5 6 8 11"/>
<dbReference type="EMBL" id="U60298">
    <property type="protein sequence ID" value="AAC47290.1"/>
    <property type="molecule type" value="Genomic_DNA"/>
</dbReference>
<dbReference type="EMBL" id="U62547">
    <property type="protein sequence ID" value="AAC47658.1"/>
    <property type="molecule type" value="mRNA"/>
</dbReference>
<dbReference type="EMBL" id="AE014134">
    <property type="protein sequence ID" value="AAF53338.1"/>
    <property type="molecule type" value="Genomic_DNA"/>
</dbReference>
<dbReference type="EMBL" id="AY089226">
    <property type="protein sequence ID" value="AAL89964.1"/>
    <property type="molecule type" value="mRNA"/>
</dbReference>
<dbReference type="EMBL" id="BT044244">
    <property type="protein sequence ID" value="ACH92309.1"/>
    <property type="molecule type" value="mRNA"/>
</dbReference>
<dbReference type="PIR" id="T13808">
    <property type="entry name" value="T13808"/>
</dbReference>
<dbReference type="PIR" id="T13810">
    <property type="entry name" value="T13810"/>
</dbReference>
<dbReference type="RefSeq" id="NP_476821.1">
    <property type="nucleotide sequence ID" value="NM_057473.4"/>
</dbReference>
<dbReference type="SMR" id="Q27607"/>
<dbReference type="BioGRID" id="60825">
    <property type="interactions" value="5"/>
</dbReference>
<dbReference type="ComplexPortal" id="CPX-2096">
    <property type="entry name" value="Mitochondrial DNA polymerase gamma complex"/>
</dbReference>
<dbReference type="FunCoup" id="Q27607">
    <property type="interactions" value="363"/>
</dbReference>
<dbReference type="IntAct" id="Q27607">
    <property type="interactions" value="2"/>
</dbReference>
<dbReference type="STRING" id="7227.FBpp0080148"/>
<dbReference type="PaxDb" id="7227-FBpp0080148"/>
<dbReference type="EnsemblMetazoa" id="FBtr0080571">
    <property type="protein sequence ID" value="FBpp0080148"/>
    <property type="gene ID" value="FBgn0004406"/>
</dbReference>
<dbReference type="GeneID" id="34792"/>
<dbReference type="KEGG" id="dme:Dmel_CG8987"/>
<dbReference type="AGR" id="FB:FBgn0004406"/>
<dbReference type="CTD" id="34792"/>
<dbReference type="FlyBase" id="FBgn0004406">
    <property type="gene designation" value="PolG1"/>
</dbReference>
<dbReference type="VEuPathDB" id="VectorBase:FBgn0004406"/>
<dbReference type="eggNOG" id="KOG3657">
    <property type="taxonomic scope" value="Eukaryota"/>
</dbReference>
<dbReference type="GeneTree" id="ENSGT00390000000453"/>
<dbReference type="HOGENOM" id="CLU_001524_2_2_1"/>
<dbReference type="InParanoid" id="Q27607"/>
<dbReference type="OMA" id="AMHITNL"/>
<dbReference type="OrthoDB" id="5588663at2759"/>
<dbReference type="PhylomeDB" id="Q27607"/>
<dbReference type="Reactome" id="R-DME-9913635">
    <property type="pathway name" value="Strand-asynchronous mitochondrial DNA replication"/>
</dbReference>
<dbReference type="BioGRID-ORCS" id="34792">
    <property type="hits" value="0 hits in 1 CRISPR screen"/>
</dbReference>
<dbReference type="ChiTaRS" id="pyd">
    <property type="organism name" value="fly"/>
</dbReference>
<dbReference type="GenomeRNAi" id="34792"/>
<dbReference type="PRO" id="PR:Q27607"/>
<dbReference type="Proteomes" id="UP000000803">
    <property type="component" value="Chromosome 2L"/>
</dbReference>
<dbReference type="Bgee" id="FBgn0004406">
    <property type="expression patterns" value="Expressed in egg cell and 15 other cell types or tissues"/>
</dbReference>
<dbReference type="GO" id="GO:0005760">
    <property type="term" value="C:gamma DNA polymerase complex"/>
    <property type="evidence" value="ECO:0000314"/>
    <property type="project" value="FlyBase"/>
</dbReference>
<dbReference type="GO" id="GO:0005759">
    <property type="term" value="C:mitochondrial matrix"/>
    <property type="evidence" value="ECO:0000303"/>
    <property type="project" value="ComplexPortal"/>
</dbReference>
<dbReference type="GO" id="GO:0042645">
    <property type="term" value="C:mitochondrial nucleoid"/>
    <property type="evidence" value="ECO:0000314"/>
    <property type="project" value="UniProtKB"/>
</dbReference>
<dbReference type="GO" id="GO:0005739">
    <property type="term" value="C:mitochondrion"/>
    <property type="evidence" value="ECO:0000314"/>
    <property type="project" value="FlyBase"/>
</dbReference>
<dbReference type="GO" id="GO:0008408">
    <property type="term" value="F:3'-5' exonuclease activity"/>
    <property type="evidence" value="ECO:0000318"/>
    <property type="project" value="GO_Central"/>
</dbReference>
<dbReference type="GO" id="GO:0008296">
    <property type="term" value="F:3'-5'-DNA exonuclease activity"/>
    <property type="evidence" value="ECO:0000314"/>
    <property type="project" value="FlyBase"/>
</dbReference>
<dbReference type="GO" id="GO:0003677">
    <property type="term" value="F:DNA binding"/>
    <property type="evidence" value="ECO:0007669"/>
    <property type="project" value="UniProtKB-KW"/>
</dbReference>
<dbReference type="GO" id="GO:0003887">
    <property type="term" value="F:DNA-directed DNA polymerase activity"/>
    <property type="evidence" value="ECO:0000314"/>
    <property type="project" value="FlyBase"/>
</dbReference>
<dbReference type="GO" id="GO:0000166">
    <property type="term" value="F:nucleotide binding"/>
    <property type="evidence" value="ECO:0000314"/>
    <property type="project" value="UniProtKB"/>
</dbReference>
<dbReference type="GO" id="GO:0045004">
    <property type="term" value="P:DNA replication proofreading"/>
    <property type="evidence" value="ECO:0000314"/>
    <property type="project" value="FlyBase"/>
</dbReference>
<dbReference type="GO" id="GO:0006261">
    <property type="term" value="P:DNA-templated DNA replication"/>
    <property type="evidence" value="ECO:0000314"/>
    <property type="project" value="FlyBase"/>
</dbReference>
<dbReference type="GO" id="GO:0006264">
    <property type="term" value="P:mitochondrial DNA replication"/>
    <property type="evidence" value="ECO:0000315"/>
    <property type="project" value="FlyBase"/>
</dbReference>
<dbReference type="GO" id="GO:0007291">
    <property type="term" value="P:sperm individualization"/>
    <property type="evidence" value="ECO:0000315"/>
    <property type="project" value="UniProtKB"/>
</dbReference>
<dbReference type="GO" id="GO:0030382">
    <property type="term" value="P:sperm mitochondrion organization"/>
    <property type="evidence" value="ECO:0000315"/>
    <property type="project" value="UniProtKB"/>
</dbReference>
<dbReference type="CDD" id="cd08641">
    <property type="entry name" value="DNA_pol_gammaA"/>
    <property type="match status" value="1"/>
</dbReference>
<dbReference type="FunFam" id="3.30.420.390:FF:000008">
    <property type="entry name" value="DNA polymerase family A"/>
    <property type="match status" value="1"/>
</dbReference>
<dbReference type="FunFam" id="1.10.150.20:FF:000125">
    <property type="entry name" value="DNA polymerase subunit gamma-1, mitochondrial"/>
    <property type="match status" value="1"/>
</dbReference>
<dbReference type="FunFam" id="3.30.420.390:FF:000004">
    <property type="entry name" value="DNA polymerase subunit gamma-1, mitochondrial"/>
    <property type="match status" value="1"/>
</dbReference>
<dbReference type="Gene3D" id="3.30.420.390">
    <property type="match status" value="2"/>
</dbReference>
<dbReference type="Gene3D" id="3.30.70.370">
    <property type="match status" value="1"/>
</dbReference>
<dbReference type="Gene3D" id="1.10.150.20">
    <property type="entry name" value="5' to 3' exonuclease, C-terminal subdomain"/>
    <property type="match status" value="1"/>
</dbReference>
<dbReference type="InterPro" id="IPR019760">
    <property type="entry name" value="DNA-dir_DNA_pol_A_CS"/>
</dbReference>
<dbReference type="InterPro" id="IPR002297">
    <property type="entry name" value="DNA-dir_DNA_pol_A_mt"/>
</dbReference>
<dbReference type="InterPro" id="IPR001098">
    <property type="entry name" value="DNA-dir_DNA_pol_A_palm_dom"/>
</dbReference>
<dbReference type="InterPro" id="IPR043502">
    <property type="entry name" value="DNA/RNA_pol_sf"/>
</dbReference>
<dbReference type="InterPro" id="IPR041336">
    <property type="entry name" value="DNApol_Exo"/>
</dbReference>
<dbReference type="InterPro" id="IPR047580">
    <property type="entry name" value="POLG_palm_dom"/>
</dbReference>
<dbReference type="InterPro" id="IPR012337">
    <property type="entry name" value="RNaseH-like_sf"/>
</dbReference>
<dbReference type="PANTHER" id="PTHR10267">
    <property type="entry name" value="DNA POLYMERASE SUBUNIT GAMMA-1"/>
    <property type="match status" value="1"/>
</dbReference>
<dbReference type="PANTHER" id="PTHR10267:SF0">
    <property type="entry name" value="DNA POLYMERASE SUBUNIT GAMMA-1"/>
    <property type="match status" value="1"/>
</dbReference>
<dbReference type="Pfam" id="PF00476">
    <property type="entry name" value="DNA_pol_A"/>
    <property type="match status" value="1"/>
</dbReference>
<dbReference type="Pfam" id="PF18136">
    <property type="entry name" value="DNApol_Exo"/>
    <property type="match status" value="1"/>
</dbReference>
<dbReference type="PRINTS" id="PR00867">
    <property type="entry name" value="DNAPOLG"/>
</dbReference>
<dbReference type="SMART" id="SM00482">
    <property type="entry name" value="POLAc"/>
    <property type="match status" value="1"/>
</dbReference>
<dbReference type="SUPFAM" id="SSF56672">
    <property type="entry name" value="DNA/RNA polymerases"/>
    <property type="match status" value="1"/>
</dbReference>
<dbReference type="SUPFAM" id="SSF53098">
    <property type="entry name" value="Ribonuclease H-like"/>
    <property type="match status" value="1"/>
</dbReference>
<dbReference type="PROSITE" id="PS00447">
    <property type="entry name" value="DNA_POLYMERASE_A"/>
    <property type="match status" value="1"/>
</dbReference>
<gene>
    <name evidence="16" type="primary">PolG1</name>
    <name evidence="16" type="synonym">DNApol-gamma</name>
    <name evidence="16" type="synonym">DNApol-gamma125</name>
    <name evidence="15" type="synonym">DNApolG1</name>
    <name evidence="16" type="synonym">l(2)34Dc</name>
    <name evidence="16" type="synonym">l(2)br5</name>
    <name evidence="16" type="synonym">MtPolA</name>
    <name evidence="13 16" type="synonym">pol gamma-alpha</name>
    <name evidence="16" type="synonym">Polg</name>
    <name evidence="14" type="synonym">tam</name>
    <name evidence="16" type="ORF">CG8987</name>
</gene>